<comment type="function">
    <text evidence="3 4 5 6 7 8">Aristolochene synthase; part of the gene cluster that mediates the biosynthesis of PR-toxin, a bicyclic sesquiterpene belonging to the eremophilane class and acting as a mycotoxin (PubMed:24239699, PubMed:27921136). The first step of the pathway is catalyzed by the aristolochene synthase which performs the cyclization of trans,trans-farnesyl diphosphate (FPP) to the bicyclic sesquiterpene aristolochene (PubMed:15186158, PubMed:24239699, PubMed:8440737). Following the formation of aristolochene, the non-oxygenated aristolochene is converted to the trioxygenated intermediate eremofortin B, via 7-epi-neopetasone (PubMed:24239699, PubMed:26274339). This conversion appears to involve three enzymes, a hydroxysterol oxidase-like enzyme, the quinone-oxidase prx3 that forms the quinone-type-structure in the bicyclic nucleus of aristolochene with the C8-oxo group and the C-3 hydroxyl group, and the P450 monooxygenase ORF6 that introduces the epoxide at the double bond between carbons 1 and 2 (PubMed:24239699, PubMed:27921136). No monoxy or dioxy-intermediates have been reported to be released to the broth, so these three early oxidative reactions may be coupled together (PubMed:24239699). Eremofortin B is further oxidized by another P450 monooxygenase, that introduces a second epoxide between carbons 7 and 11 prior to acetylation to eremofortin A by the acetyltransferase ORF8 (PubMed:16345540, PubMed:24239699, PubMed:27921136). The second epoxidation may be performed by a second P450 monooxygenase (PubMed:24239699). After the acetylation step, eremofortin A is converted to eremofortin C and then to PR-toxin (PubMed:24239699). First the conversion of eremofortin A to eremofortin C proceeds by oxidation of the side chain of the molecule at C-12 and is catalyzed by the short-chain oxidoreductase prx1 (PubMed:16345540, PubMed:24239699). The cytochrome P450 monooxygenase ORF5 also plays a role in this step (PubMed:27921136). The primary alcohol formed at C-12 is finally oxidized by the short-chain alcohol dehydrogenase prx4 that forms PR-toxin (PubMed:16345540, PubMed:24239699).</text>
</comment>
<comment type="catalytic activity">
    <reaction evidence="3 8">
        <text>(2E,6E)-farnesyl diphosphate = (+)-aristolochene + diphosphate</text>
        <dbReference type="Rhea" id="RHEA:19825"/>
        <dbReference type="ChEBI" id="CHEBI:33019"/>
        <dbReference type="ChEBI" id="CHEBI:43445"/>
        <dbReference type="ChEBI" id="CHEBI:175763"/>
        <dbReference type="EC" id="4.2.3.9"/>
    </reaction>
</comment>
<comment type="cofactor">
    <cofactor evidence="2">
        <name>Mg(2+)</name>
        <dbReference type="ChEBI" id="CHEBI:18420"/>
    </cofactor>
    <text evidence="2">Binds 3 Mg(2+) ions per subunit.</text>
</comment>
<comment type="biophysicochemical properties">
    <kinetics>
        <KM evidence="3">0.6 uM for (2E,6E)-farnesyl diphosphate</KM>
    </kinetics>
</comment>
<comment type="pathway">
    <text evidence="3 8">Sesquiterpene biosynthesis; aristolochene biosynthesis; aristolochene from farnesyl diphosphate: step 1/1.</text>
</comment>
<comment type="subunit">
    <text evidence="2">Homodimer.</text>
</comment>
<comment type="disruption phenotype">
    <text evidence="5">Reduces the production of PR-toxin and leads to a large increase in mycophenolic acid production.</text>
</comment>
<comment type="similarity">
    <text evidence="12">Belongs to the terpene synthase family.</text>
</comment>
<feature type="chain" id="PRO_0000451228" description="Aristolochene synthase">
    <location>
        <begin position="1"/>
        <end position="342"/>
    </location>
</feature>
<feature type="binding site" evidence="2">
    <location>
        <position position="115"/>
    </location>
    <ligand>
        <name>Mg(2+)</name>
        <dbReference type="ChEBI" id="CHEBI:18420"/>
        <label>1</label>
    </ligand>
</feature>
<feature type="binding site" evidence="2">
    <location>
        <position position="115"/>
    </location>
    <ligand>
        <name>Mg(2+)</name>
        <dbReference type="ChEBI" id="CHEBI:18420"/>
        <label>2</label>
    </ligand>
</feature>
<feature type="binding site" evidence="2">
    <location>
        <position position="244"/>
    </location>
    <ligand>
        <name>Mg(2+)</name>
        <dbReference type="ChEBI" id="CHEBI:18420"/>
        <label>3</label>
    </ligand>
</feature>
<feature type="binding site" evidence="2">
    <location>
        <position position="248"/>
    </location>
    <ligand>
        <name>Mg(2+)</name>
        <dbReference type="ChEBI" id="CHEBI:18420"/>
        <label>3</label>
    </ligand>
</feature>
<feature type="binding site" evidence="2">
    <location>
        <position position="252"/>
    </location>
    <ligand>
        <name>Mg(2+)</name>
        <dbReference type="ChEBI" id="CHEBI:18420"/>
        <label>3</label>
    </ligand>
</feature>
<feature type="binding site" evidence="2">
    <location>
        <position position="340"/>
    </location>
    <ligand>
        <name>(2E,6E)-farnesyl diphosphate</name>
        <dbReference type="ChEBI" id="CHEBI:175763"/>
    </ligand>
</feature>
<feature type="binding site" evidence="2">
    <location>
        <position position="341"/>
    </location>
    <ligand>
        <name>(2E,6E)-farnesyl diphosphate</name>
        <dbReference type="ChEBI" id="CHEBI:175763"/>
    </ligand>
</feature>
<feature type="site" description="Important for catalytic activity" evidence="1">
    <location>
        <position position="92"/>
    </location>
</feature>
<feature type="site" description="Important for catalytic activity" evidence="1">
    <location>
        <position position="112"/>
    </location>
</feature>
<feature type="site" description="Important for catalytic activity" evidence="1">
    <location>
        <position position="178"/>
    </location>
</feature>
<feature type="site" description="Important for catalytic activity" evidence="1">
    <location>
        <position position="334"/>
    </location>
</feature>
<feature type="mutagenesis site" description="Causes 100-fold reduction in kcat but a 50-fold decrease in KM, resulting in a 2-fold decrease in catalytic efficiency." evidence="3">
    <original>Y</original>
    <variation>F</variation>
    <location>
        <position position="92"/>
    </location>
</feature>
<feature type="mutagenesis site" description="Abolishes catalytic activity." evidence="3">
    <original>D</original>
    <variation>N</variation>
    <location>
        <position position="115"/>
    </location>
</feature>
<feature type="mutagenesis site" description="Abolishes catalytic activity." evidence="3">
    <original>N</original>
    <variation>L</variation>
    <location>
        <position position="244"/>
    </location>
</feature>
<feature type="mutagenesis site" description="Abolishes catalytic activity; when associated with D-252." evidence="3">
    <original>S</original>
    <variation>A</variation>
    <location>
        <position position="248"/>
    </location>
</feature>
<feature type="mutagenesis site" description="Abolishes catalytic activity; when associated with A-248." evidence="3">
    <original>E</original>
    <variation>D</variation>
    <location>
        <position position="252"/>
    </location>
</feature>
<reference key="1">
    <citation type="journal article" date="2014" name="Nat. Commun.">
        <title>Multiple recent horizontal transfers of a large genomic region in cheese making fungi.</title>
        <authorList>
            <person name="Cheeseman K."/>
            <person name="Ropars J."/>
            <person name="Renault P."/>
            <person name="Dupont J."/>
            <person name="Gouzy J."/>
            <person name="Branca A."/>
            <person name="Abraham A.-L."/>
            <person name="Ceppi M."/>
            <person name="Conseiller E."/>
            <person name="Debuchy R."/>
            <person name="Malagnac F."/>
            <person name="Goarin A."/>
            <person name="Silar P."/>
            <person name="Lacoste S."/>
            <person name="Sallet E."/>
            <person name="Bensimon A."/>
            <person name="Giraud T."/>
            <person name="Brygoo Y."/>
        </authorList>
    </citation>
    <scope>NUCLEOTIDE SEQUENCE [LARGE SCALE GENOMIC DNA]</scope>
    <source>
        <strain>FM164</strain>
    </source>
</reference>
<reference key="2">
    <citation type="journal article" date="1993" name="J. Biol. Chem.">
        <title>Aristolochene synthase. Isolation, characterization, and bacterial expression of a sesquiterpenoid biosynthetic gene (Ari1) from Penicillium roqueforti.</title>
        <authorList>
            <person name="Proctor R.H."/>
            <person name="Hohn T.M."/>
        </authorList>
    </citation>
    <scope>FUNCTION</scope>
    <scope>CATALYTIC ACTIVITY</scope>
</reference>
<reference key="3">
    <citation type="journal article" date="1980" name="Appl. Environ. Microbiol.">
        <title>Production of eremofortins A, B, and C relative to formation of PR toxin by Penicillium roqueforti.</title>
        <authorList>
            <person name="Moreau S."/>
            <person name="Lablache-Combier A."/>
            <person name="Biguet J."/>
        </authorList>
    </citation>
    <scope>FUNCTION</scope>
</reference>
<reference key="4">
    <citation type="journal article" date="2004" name="J. Am. Chem. Soc.">
        <title>Aristolochene synthase: mechanistic analysis of active site residues by site-directed mutagenesis.</title>
        <authorList>
            <person name="Felicetti B."/>
            <person name="Cane D.E."/>
        </authorList>
    </citation>
    <scope>FUNCTION</scope>
    <scope>CATALYTIC ACTIVITY</scope>
    <scope>BIOPHYSICOCHEMICAL PROPERTIES</scope>
    <scope>MUTAGENESIS OF TYR-92; ASP-115; ASN-244; SER-248 AND GLU-252</scope>
</reference>
<reference key="5">
    <citation type="journal article" date="2014" name="Fungal Genet. Biol.">
        <title>Molecular characterization of the PR-toxin gene cluster in Penicillium roqueforti and Penicillium chrysogenum: cross talk of secondary metabolite pathways.</title>
        <authorList>
            <person name="Hidalgo P.I."/>
            <person name="Ullan R.V."/>
            <person name="Albillos S.M."/>
            <person name="Montero O."/>
            <person name="Fernandez-Bodega M.A."/>
            <person name="Garcia-Estrada C."/>
            <person name="Fernandez-Aguado M."/>
            <person name="Martin J.F."/>
        </authorList>
    </citation>
    <scope>FUNCTION</scope>
    <scope>DISRUPTION PHENOTYPE</scope>
    <scope>PATHWAY</scope>
</reference>
<reference key="6">
    <citation type="journal article" date="2015" name="Angew. Chem. Int. Ed.">
        <title>Identification of intermediates in the biosynthesis of PR toxin by Penicillium roqueforti.</title>
        <authorList>
            <person name="Riclea R."/>
            <person name="Dickschat J.S."/>
        </authorList>
    </citation>
    <scope>FUNCTION</scope>
</reference>
<reference key="7">
    <citation type="journal article" date="2017" name="Appl. Microbiol. Biotechnol.">
        <title>Penicillium roqueforti PR toxin gene cluster characterization.</title>
        <authorList>
            <person name="Hidalgo P.I."/>
            <person name="Poirier E."/>
            <person name="Ullan R.V."/>
            <person name="Piqueras J."/>
            <person name="Meslet-Cladiere L."/>
            <person name="Coton E."/>
            <person name="Coton M."/>
        </authorList>
    </citation>
    <scope>FUNCTION</scope>
    <scope>PATHWAY</scope>
</reference>
<gene>
    <name evidence="10" type="primary">prx2</name>
    <name evidence="9" type="synonym">ari1</name>
    <name evidence="11" type="synonym">ORF2</name>
    <name type="ORF">PROQFM164_S02g001465</name>
</gene>
<organism>
    <name type="scientific">Penicillium roqueforti (strain FM164)</name>
    <dbReference type="NCBI Taxonomy" id="1365484"/>
    <lineage>
        <taxon>Eukaryota</taxon>
        <taxon>Fungi</taxon>
        <taxon>Dikarya</taxon>
        <taxon>Ascomycota</taxon>
        <taxon>Pezizomycotina</taxon>
        <taxon>Eurotiomycetes</taxon>
        <taxon>Eurotiomycetidae</taxon>
        <taxon>Eurotiales</taxon>
        <taxon>Aspergillaceae</taxon>
        <taxon>Penicillium</taxon>
    </lineage>
</organism>
<protein>
    <recommendedName>
        <fullName evidence="9">Aristolochene synthase</fullName>
        <shortName evidence="9">AS</shortName>
        <ecNumber evidence="3 8">4.2.3.9</ecNumber>
    </recommendedName>
    <alternativeName>
        <fullName evidence="10">PR-toxin biosynthesis cluster protein 2</fullName>
    </alternativeName>
    <alternativeName>
        <fullName evidence="9">Sesquiterpene cyclase</fullName>
    </alternativeName>
</protein>
<name>PRX2_PENRF</name>
<sequence length="342" mass="39192">MATSTETISSLAQPFVHLENPINSPLVKETIRPRNDTTITPPPTQWSYLCHPRVKEVQDEVDGYFLENWKFPSFKAVRTFLDAKFSEVTCLYFPLALDDRIHFACRLLTVLFLIDDVLEHMSFADGEAYNNRLIPISRGDVLPDRTKPEEFILYDLWESMRAHDAELANEVLEPTFVFMRAQTDRARLSIHELGHYLEYREKDVGKALLSALMRFSMGLRLSADELQDMKALEANCAKQLSVVNDIYSYDKEEEASRTGHKEGAFLCSAVKVLAEESKLGIPATKRVLWSMTREWETVHDEIVAEKIASPDGCSEAAKAYMKGLEYQMSGNEQWSKTTRRYN</sequence>
<evidence type="ECO:0000250" key="1">
    <source>
        <dbReference type="UniProtKB" id="Q03471"/>
    </source>
</evidence>
<evidence type="ECO:0000250" key="2">
    <source>
        <dbReference type="UniProtKB" id="Q9UR08"/>
    </source>
</evidence>
<evidence type="ECO:0000269" key="3">
    <source>
    </source>
</evidence>
<evidence type="ECO:0000269" key="4">
    <source>
    </source>
</evidence>
<evidence type="ECO:0000269" key="5">
    <source>
    </source>
</evidence>
<evidence type="ECO:0000269" key="6">
    <source>
    </source>
</evidence>
<evidence type="ECO:0000269" key="7">
    <source>
    </source>
</evidence>
<evidence type="ECO:0000269" key="8">
    <source>
    </source>
</evidence>
<evidence type="ECO:0000303" key="9">
    <source>
    </source>
</evidence>
<evidence type="ECO:0000303" key="10">
    <source>
    </source>
</evidence>
<evidence type="ECO:0000303" key="11">
    <source>
    </source>
</evidence>
<evidence type="ECO:0000305" key="12"/>
<proteinExistence type="evidence at protein level"/>
<keyword id="KW-0456">Lyase</keyword>
<keyword id="KW-0460">Magnesium</keyword>
<keyword id="KW-0479">Metal-binding</keyword>
<keyword id="KW-1185">Reference proteome</keyword>
<dbReference type="EC" id="4.2.3.9" evidence="3 8"/>
<dbReference type="EMBL" id="HG792016">
    <property type="protein sequence ID" value="CDM31315.1"/>
    <property type="molecule type" value="Genomic_DNA"/>
</dbReference>
<dbReference type="SMR" id="W6Q4Q9"/>
<dbReference type="STRING" id="1365484.W6Q4Q9"/>
<dbReference type="OMA" id="FQMSGNE"/>
<dbReference type="OrthoDB" id="3004402at2759"/>
<dbReference type="UniPathway" id="UPA00177">
    <property type="reaction ID" value="UER00582"/>
</dbReference>
<dbReference type="Proteomes" id="UP000030686">
    <property type="component" value="Unassembled WGS sequence"/>
</dbReference>
<dbReference type="GO" id="GO:0045483">
    <property type="term" value="F:aristolochene synthase activity"/>
    <property type="evidence" value="ECO:0007669"/>
    <property type="project" value="UniProtKB-EC"/>
</dbReference>
<dbReference type="GO" id="GO:0046872">
    <property type="term" value="F:metal ion binding"/>
    <property type="evidence" value="ECO:0007669"/>
    <property type="project" value="UniProtKB-KW"/>
</dbReference>
<dbReference type="GO" id="GO:0008299">
    <property type="term" value="P:isoprenoid biosynthetic process"/>
    <property type="evidence" value="ECO:0007669"/>
    <property type="project" value="UniProtKB-ARBA"/>
</dbReference>
<dbReference type="CDD" id="cd00687">
    <property type="entry name" value="Terpene_cyclase_nonplant_C1"/>
    <property type="match status" value="1"/>
</dbReference>
<dbReference type="Gene3D" id="1.10.600.10">
    <property type="entry name" value="Farnesyl Diphosphate Synthase"/>
    <property type="match status" value="1"/>
</dbReference>
<dbReference type="InterPro" id="IPR008949">
    <property type="entry name" value="Isoprenoid_synthase_dom_sf"/>
</dbReference>
<dbReference type="InterPro" id="IPR034686">
    <property type="entry name" value="Terpene_cyclase-like_2"/>
</dbReference>
<dbReference type="PANTHER" id="PTHR35201:SF4">
    <property type="entry name" value="BETA-PINACENE SYNTHASE-RELATED"/>
    <property type="match status" value="1"/>
</dbReference>
<dbReference type="PANTHER" id="PTHR35201">
    <property type="entry name" value="TERPENE SYNTHASE"/>
    <property type="match status" value="1"/>
</dbReference>
<dbReference type="Pfam" id="PF19086">
    <property type="entry name" value="Terpene_syn_C_2"/>
    <property type="match status" value="1"/>
</dbReference>
<dbReference type="SUPFAM" id="SSF48576">
    <property type="entry name" value="Terpenoid synthases"/>
    <property type="match status" value="1"/>
</dbReference>
<accession>W6Q4Q9</accession>